<protein>
    <recommendedName>
        <fullName evidence="1">Flap endonuclease 1</fullName>
        <shortName evidence="1">FEN-1</shortName>
        <ecNumber evidence="1">3.1.-.-</ecNumber>
    </recommendedName>
    <alternativeName>
        <fullName evidence="1">Flap structure-specific endonuclease 1</fullName>
    </alternativeName>
</protein>
<keyword id="KW-0227">DNA damage</keyword>
<keyword id="KW-0234">DNA repair</keyword>
<keyword id="KW-0235">DNA replication</keyword>
<keyword id="KW-0255">Endonuclease</keyword>
<keyword id="KW-0269">Exonuclease</keyword>
<keyword id="KW-0378">Hydrolase</keyword>
<keyword id="KW-0460">Magnesium</keyword>
<keyword id="KW-0479">Metal-binding</keyword>
<keyword id="KW-0496">Mitochondrion</keyword>
<keyword id="KW-0540">Nuclease</keyword>
<keyword id="KW-0539">Nucleus</keyword>
<keyword id="KW-0597">Phosphoprotein</keyword>
<keyword id="KW-1185">Reference proteome</keyword>
<reference key="1">
    <citation type="journal article" date="2015" name="Genome Announc.">
        <title>Genome sequence of the AIDS-associated pathogen Penicillium marneffei (ATCC18224) and its near taxonomic relative Talaromyces stipitatus (ATCC10500).</title>
        <authorList>
            <person name="Nierman W.C."/>
            <person name="Fedorova-Abrams N.D."/>
            <person name="Andrianopoulos A."/>
        </authorList>
    </citation>
    <scope>NUCLEOTIDE SEQUENCE [LARGE SCALE GENOMIC DNA]</scope>
    <source>
        <strain>ATCC 10500 / CBS 375.48 / QM 6759 / NRRL 1006</strain>
    </source>
</reference>
<feature type="chain" id="PRO_0000403602" description="Flap endonuclease 1">
    <location>
        <begin position="1"/>
        <end position="395"/>
    </location>
</feature>
<feature type="region of interest" description="N-domain">
    <location>
        <begin position="1"/>
        <end position="104"/>
    </location>
</feature>
<feature type="region of interest" description="Disordered" evidence="2">
    <location>
        <begin position="99"/>
        <end position="126"/>
    </location>
</feature>
<feature type="region of interest" description="I-domain">
    <location>
        <begin position="122"/>
        <end position="253"/>
    </location>
</feature>
<feature type="region of interest" description="Interaction with PCNA" evidence="1">
    <location>
        <begin position="341"/>
        <end position="349"/>
    </location>
</feature>
<feature type="region of interest" description="Disordered" evidence="2">
    <location>
        <begin position="356"/>
        <end position="395"/>
    </location>
</feature>
<feature type="compositionally biased region" description="Basic and acidic residues" evidence="2">
    <location>
        <begin position="356"/>
        <end position="389"/>
    </location>
</feature>
<feature type="binding site" evidence="1">
    <location>
        <position position="34"/>
    </location>
    <ligand>
        <name>Mg(2+)</name>
        <dbReference type="ChEBI" id="CHEBI:18420"/>
        <label>1</label>
    </ligand>
</feature>
<feature type="binding site" evidence="1">
    <location>
        <position position="47"/>
    </location>
    <ligand>
        <name>DNA</name>
        <dbReference type="ChEBI" id="CHEBI:16991"/>
    </ligand>
</feature>
<feature type="binding site" evidence="1">
    <location>
        <position position="70"/>
    </location>
    <ligand>
        <name>DNA</name>
        <dbReference type="ChEBI" id="CHEBI:16991"/>
    </ligand>
</feature>
<feature type="binding site" evidence="1">
    <location>
        <position position="86"/>
    </location>
    <ligand>
        <name>Mg(2+)</name>
        <dbReference type="ChEBI" id="CHEBI:18420"/>
        <label>1</label>
    </ligand>
</feature>
<feature type="binding site" evidence="1">
    <location>
        <position position="158"/>
    </location>
    <ligand>
        <name>DNA</name>
        <dbReference type="ChEBI" id="CHEBI:16991"/>
    </ligand>
</feature>
<feature type="binding site" evidence="1">
    <location>
        <position position="158"/>
    </location>
    <ligand>
        <name>Mg(2+)</name>
        <dbReference type="ChEBI" id="CHEBI:18420"/>
        <label>1</label>
    </ligand>
</feature>
<feature type="binding site" evidence="1">
    <location>
        <position position="160"/>
    </location>
    <ligand>
        <name>Mg(2+)</name>
        <dbReference type="ChEBI" id="CHEBI:18420"/>
        <label>1</label>
    </ligand>
</feature>
<feature type="binding site" evidence="1">
    <location>
        <position position="179"/>
    </location>
    <ligand>
        <name>Mg(2+)</name>
        <dbReference type="ChEBI" id="CHEBI:18420"/>
        <label>2</label>
    </ligand>
</feature>
<feature type="binding site" evidence="1">
    <location>
        <position position="181"/>
    </location>
    <ligand>
        <name>Mg(2+)</name>
        <dbReference type="ChEBI" id="CHEBI:18420"/>
        <label>2</label>
    </ligand>
</feature>
<feature type="binding site" evidence="1">
    <location>
        <position position="231"/>
    </location>
    <ligand>
        <name>DNA</name>
        <dbReference type="ChEBI" id="CHEBI:16991"/>
    </ligand>
</feature>
<feature type="binding site" evidence="1">
    <location>
        <position position="233"/>
    </location>
    <ligand>
        <name>DNA</name>
        <dbReference type="ChEBI" id="CHEBI:16991"/>
    </ligand>
</feature>
<feature type="binding site" evidence="1">
    <location>
        <position position="233"/>
    </location>
    <ligand>
        <name>Mg(2+)</name>
        <dbReference type="ChEBI" id="CHEBI:18420"/>
        <label>2</label>
    </ligand>
</feature>
<evidence type="ECO:0000255" key="1">
    <source>
        <dbReference type="HAMAP-Rule" id="MF_03140"/>
    </source>
</evidence>
<evidence type="ECO:0000256" key="2">
    <source>
        <dbReference type="SAM" id="MobiDB-lite"/>
    </source>
</evidence>
<evidence type="ECO:0000305" key="3"/>
<comment type="function">
    <text evidence="1">Structure-specific nuclease with 5'-flap endonuclease and 5'-3' exonuclease activities involved in DNA replication and repair. During DNA replication, cleaves the 5'-overhanging flap structure that is generated by displacement synthesis when DNA polymerase encounters the 5'-end of a downstream Okazaki fragment. It enters the flap from the 5'-end and then tracks to cleave the flap base, leaving a nick for ligation. Also involved in the long patch base excision repair (LP-BER) pathway, by cleaving within the apurinic/apyrimidinic (AP) site-terminated flap. Acts as a genome stabilization factor that prevents flaps from equilibrating into structures that lead to duplications and deletions. Also possesses 5'-3' exonuclease activity on nicked or gapped double-stranded DNA, and exhibits RNase H activity. Also involved in replication and repair of rDNA and in repairing mitochondrial DNA.</text>
</comment>
<comment type="cofactor">
    <cofactor evidence="1">
        <name>Mg(2+)</name>
        <dbReference type="ChEBI" id="CHEBI:18420"/>
    </cofactor>
    <text evidence="1">Binds 2 magnesium ions per subunit. They probably participate in the reaction catalyzed by the enzyme. May bind an additional third magnesium ion after substrate binding.</text>
</comment>
<comment type="subunit">
    <text evidence="1">Interacts with PCNA. Three molecules of fen1 bind to one PCNA trimer with each molecule binding to one PCNA monomer. PCNA stimulates the nuclease activity without altering cleavage specificity.</text>
</comment>
<comment type="subcellular location">
    <subcellularLocation>
        <location evidence="1">Nucleus</location>
        <location evidence="1">Nucleolus</location>
    </subcellularLocation>
    <subcellularLocation>
        <location evidence="1">Nucleus</location>
        <location evidence="1">Nucleoplasm</location>
    </subcellularLocation>
    <subcellularLocation>
        <location evidence="1">Mitochondrion</location>
    </subcellularLocation>
    <text evidence="1">Resides mostly in the nucleoli and relocalizes to the nucleoplasm upon DNA damage.</text>
</comment>
<comment type="PTM">
    <text evidence="1">Phosphorylated. Phosphorylation upon DNA damage induces relocalization to the nuclear plasma.</text>
</comment>
<comment type="similarity">
    <text evidence="1">Belongs to the XPG/RAD2 endonuclease family. FEN1 subfamily.</text>
</comment>
<comment type="sequence caution" evidence="3">
    <conflict type="erroneous gene model prediction">
        <sequence resource="EMBL-CDS" id="EED14041"/>
    </conflict>
</comment>
<sequence>MGIKHLYQVISENAPDAVKTGEIKNHFGRKVAIDASMSIYSFLIAVRSDGQQLMSDAGETTSHLMGMFYRTLRIVDNGIKPLYVFDGAPPKLKGGELAKRSARKREAHEAHEEAKETGTAEDMEKFSRRTVRVTREHNEECKKLLKLMGVPYIDAPTEAEAQCAVLARAGKVYAAASEDMDTLCFEAPILLRHLTFSEQRKEPIQEIHLDKALEGLGMDRKQFIDLCILLGCDYLEPIPKVGPNTALKLIREHGSLEKVVEAIESDPKKKYVIPDDWPYKEARELFFNPDVRKADDPQCDFKWESPDVEGLIQFLVTEKGFSEDRVRNGAARLAKNLKSAQQSRLEGFFKPVTKTEAEKASLKRKHDEKIEEQKKRKKEEAKAKKEAKARPRGAV</sequence>
<name>FEN1_TALSN</name>
<organism>
    <name type="scientific">Talaromyces stipitatus (strain ATCC 10500 / CBS 375.48 / QM 6759 / NRRL 1006)</name>
    <name type="common">Penicillium stipitatum</name>
    <dbReference type="NCBI Taxonomy" id="441959"/>
    <lineage>
        <taxon>Eukaryota</taxon>
        <taxon>Fungi</taxon>
        <taxon>Dikarya</taxon>
        <taxon>Ascomycota</taxon>
        <taxon>Pezizomycotina</taxon>
        <taxon>Eurotiomycetes</taxon>
        <taxon>Eurotiomycetidae</taxon>
        <taxon>Eurotiales</taxon>
        <taxon>Trichocomaceae</taxon>
        <taxon>Talaromyces</taxon>
        <taxon>Talaromyces sect. Talaromyces</taxon>
    </lineage>
</organism>
<gene>
    <name type="primary">fen1</name>
    <name type="ORF">TSTA_102710</name>
</gene>
<dbReference type="EC" id="3.1.-.-" evidence="1"/>
<dbReference type="EMBL" id="EQ962658">
    <property type="protein sequence ID" value="EED14041.1"/>
    <property type="status" value="ALT_SEQ"/>
    <property type="molecule type" value="Genomic_DNA"/>
</dbReference>
<dbReference type="RefSeq" id="XP_002486279.1">
    <property type="nucleotide sequence ID" value="XM_002486234.1"/>
</dbReference>
<dbReference type="SMR" id="B8MNF2"/>
<dbReference type="FunCoup" id="B8MNF2">
    <property type="interactions" value="1063"/>
</dbReference>
<dbReference type="STRING" id="441959.B8MNF2"/>
<dbReference type="GeneID" id="8101105"/>
<dbReference type="eggNOG" id="KOG2519">
    <property type="taxonomic scope" value="Eukaryota"/>
</dbReference>
<dbReference type="HOGENOM" id="CLU_032444_1_1_1"/>
<dbReference type="InParanoid" id="B8MNF2"/>
<dbReference type="OrthoDB" id="1937206at2759"/>
<dbReference type="Proteomes" id="UP000001745">
    <property type="component" value="Unassembled WGS sequence"/>
</dbReference>
<dbReference type="GO" id="GO:0005739">
    <property type="term" value="C:mitochondrion"/>
    <property type="evidence" value="ECO:0007669"/>
    <property type="project" value="UniProtKB-SubCell"/>
</dbReference>
<dbReference type="GO" id="GO:0005730">
    <property type="term" value="C:nucleolus"/>
    <property type="evidence" value="ECO:0007669"/>
    <property type="project" value="UniProtKB-SubCell"/>
</dbReference>
<dbReference type="GO" id="GO:0005654">
    <property type="term" value="C:nucleoplasm"/>
    <property type="evidence" value="ECO:0007669"/>
    <property type="project" value="UniProtKB-SubCell"/>
</dbReference>
<dbReference type="GO" id="GO:0008409">
    <property type="term" value="F:5'-3' exonuclease activity"/>
    <property type="evidence" value="ECO:0007669"/>
    <property type="project" value="UniProtKB-UniRule"/>
</dbReference>
<dbReference type="GO" id="GO:0017108">
    <property type="term" value="F:5'-flap endonuclease activity"/>
    <property type="evidence" value="ECO:0007669"/>
    <property type="project" value="UniProtKB-UniRule"/>
</dbReference>
<dbReference type="GO" id="GO:0003677">
    <property type="term" value="F:DNA binding"/>
    <property type="evidence" value="ECO:0007669"/>
    <property type="project" value="UniProtKB-UniRule"/>
</dbReference>
<dbReference type="GO" id="GO:0000287">
    <property type="term" value="F:magnesium ion binding"/>
    <property type="evidence" value="ECO:0007669"/>
    <property type="project" value="UniProtKB-UniRule"/>
</dbReference>
<dbReference type="GO" id="GO:0006284">
    <property type="term" value="P:base-excision repair"/>
    <property type="evidence" value="ECO:0007669"/>
    <property type="project" value="UniProtKB-UniRule"/>
</dbReference>
<dbReference type="GO" id="GO:0043137">
    <property type="term" value="P:DNA replication, removal of RNA primer"/>
    <property type="evidence" value="ECO:0007669"/>
    <property type="project" value="UniProtKB-UniRule"/>
</dbReference>
<dbReference type="CDD" id="cd09907">
    <property type="entry name" value="H3TH_FEN1-Euk"/>
    <property type="match status" value="1"/>
</dbReference>
<dbReference type="CDD" id="cd09867">
    <property type="entry name" value="PIN_FEN1"/>
    <property type="match status" value="1"/>
</dbReference>
<dbReference type="FunFam" id="1.10.150.20:FF:000009">
    <property type="entry name" value="Flap endonuclease 1"/>
    <property type="match status" value="1"/>
</dbReference>
<dbReference type="FunFam" id="3.40.50.1010:FF:000003">
    <property type="entry name" value="Flap endonuclease 1"/>
    <property type="match status" value="1"/>
</dbReference>
<dbReference type="Gene3D" id="1.10.150.20">
    <property type="entry name" value="5' to 3' exonuclease, C-terminal subdomain"/>
    <property type="match status" value="1"/>
</dbReference>
<dbReference type="Gene3D" id="3.40.50.1010">
    <property type="entry name" value="5'-nuclease"/>
    <property type="match status" value="1"/>
</dbReference>
<dbReference type="HAMAP" id="MF_00614">
    <property type="entry name" value="Fen"/>
    <property type="match status" value="1"/>
</dbReference>
<dbReference type="InterPro" id="IPR036279">
    <property type="entry name" value="5-3_exonuclease_C_sf"/>
</dbReference>
<dbReference type="InterPro" id="IPR023426">
    <property type="entry name" value="Flap_endonuc"/>
</dbReference>
<dbReference type="InterPro" id="IPR008918">
    <property type="entry name" value="HhH2"/>
</dbReference>
<dbReference type="InterPro" id="IPR029060">
    <property type="entry name" value="PIN-like_dom_sf"/>
</dbReference>
<dbReference type="InterPro" id="IPR006086">
    <property type="entry name" value="XPG-I_dom"/>
</dbReference>
<dbReference type="InterPro" id="IPR006084">
    <property type="entry name" value="XPG/Rad2"/>
</dbReference>
<dbReference type="InterPro" id="IPR019974">
    <property type="entry name" value="XPG_CS"/>
</dbReference>
<dbReference type="InterPro" id="IPR006085">
    <property type="entry name" value="XPG_DNA_repair_N"/>
</dbReference>
<dbReference type="PANTHER" id="PTHR11081:SF9">
    <property type="entry name" value="FLAP ENDONUCLEASE 1"/>
    <property type="match status" value="1"/>
</dbReference>
<dbReference type="PANTHER" id="PTHR11081">
    <property type="entry name" value="FLAP ENDONUCLEASE FAMILY MEMBER"/>
    <property type="match status" value="1"/>
</dbReference>
<dbReference type="Pfam" id="PF00867">
    <property type="entry name" value="XPG_I"/>
    <property type="match status" value="1"/>
</dbReference>
<dbReference type="Pfam" id="PF00752">
    <property type="entry name" value="XPG_N"/>
    <property type="match status" value="1"/>
</dbReference>
<dbReference type="PRINTS" id="PR00853">
    <property type="entry name" value="XPGRADSUPER"/>
</dbReference>
<dbReference type="SMART" id="SM00279">
    <property type="entry name" value="HhH2"/>
    <property type="match status" value="1"/>
</dbReference>
<dbReference type="SMART" id="SM00484">
    <property type="entry name" value="XPGI"/>
    <property type="match status" value="1"/>
</dbReference>
<dbReference type="SMART" id="SM00485">
    <property type="entry name" value="XPGN"/>
    <property type="match status" value="1"/>
</dbReference>
<dbReference type="SUPFAM" id="SSF47807">
    <property type="entry name" value="5' to 3' exonuclease, C-terminal subdomain"/>
    <property type="match status" value="1"/>
</dbReference>
<dbReference type="SUPFAM" id="SSF88723">
    <property type="entry name" value="PIN domain-like"/>
    <property type="match status" value="1"/>
</dbReference>
<dbReference type="PROSITE" id="PS00841">
    <property type="entry name" value="XPG_1"/>
    <property type="match status" value="1"/>
</dbReference>
<dbReference type="PROSITE" id="PS00842">
    <property type="entry name" value="XPG_2"/>
    <property type="match status" value="1"/>
</dbReference>
<proteinExistence type="inferred from homology"/>
<accession>B8MNF2</accession>